<accession>Q8R1F5</accession>
<accession>A2A9C1</accession>
<accession>Q497S8</accession>
<dbReference type="EC" id="5.3.1.22"/>
<dbReference type="EMBL" id="AL627212">
    <property type="protein sequence ID" value="CAM15196.1"/>
    <property type="status" value="ALT_SEQ"/>
    <property type="molecule type" value="Genomic_DNA"/>
</dbReference>
<dbReference type="EMBL" id="BC024619">
    <property type="protein sequence ID" value="AAH24619.1"/>
    <property type="molecule type" value="mRNA"/>
</dbReference>
<dbReference type="EMBL" id="BC100401">
    <property type="protein sequence ID" value="AAI00402.1"/>
    <property type="molecule type" value="mRNA"/>
</dbReference>
<dbReference type="RefSeq" id="NP_080877.3">
    <property type="nucleotide sequence ID" value="NM_026601.3"/>
</dbReference>
<dbReference type="SMR" id="Q8R1F5"/>
<dbReference type="FunCoup" id="Q8R1F5">
    <property type="interactions" value="34"/>
</dbReference>
<dbReference type="PhosphoSitePlus" id="Q8R1F5"/>
<dbReference type="PaxDb" id="10090-ENSMUSP00000006562"/>
<dbReference type="PeptideAtlas" id="Q8R1F5"/>
<dbReference type="ProteomicsDB" id="266937"/>
<dbReference type="Pumba" id="Q8R1F5"/>
<dbReference type="DNASU" id="68180"/>
<dbReference type="GeneID" id="68180"/>
<dbReference type="KEGG" id="mmu:68180"/>
<dbReference type="UCSC" id="uc008ujr.3">
    <property type="organism name" value="mouse"/>
</dbReference>
<dbReference type="AGR" id="MGI:1915430"/>
<dbReference type="CTD" id="81888"/>
<dbReference type="MGI" id="MGI:1915430">
    <property type="gene designation" value="Hyi"/>
</dbReference>
<dbReference type="eggNOG" id="KOG4518">
    <property type="taxonomic scope" value="Eukaryota"/>
</dbReference>
<dbReference type="InParanoid" id="Q8R1F5"/>
<dbReference type="PhylomeDB" id="Q8R1F5"/>
<dbReference type="BioGRID-ORCS" id="68180">
    <property type="hits" value="1 hit in 22 CRISPR screens"/>
</dbReference>
<dbReference type="ChiTaRS" id="Hyi">
    <property type="organism name" value="mouse"/>
</dbReference>
<dbReference type="PRO" id="PR:Q8R1F5"/>
<dbReference type="Proteomes" id="UP000000589">
    <property type="component" value="Unplaced"/>
</dbReference>
<dbReference type="RNAct" id="Q8R1F5">
    <property type="molecule type" value="protein"/>
</dbReference>
<dbReference type="GO" id="GO:0008903">
    <property type="term" value="F:hydroxypyruvate isomerase activity"/>
    <property type="evidence" value="ECO:0007669"/>
    <property type="project" value="UniProtKB-EC"/>
</dbReference>
<dbReference type="FunFam" id="3.20.20.150:FF:000011">
    <property type="entry name" value="Putative hydroxypyruvate isomerase"/>
    <property type="match status" value="1"/>
</dbReference>
<dbReference type="Gene3D" id="3.20.20.150">
    <property type="entry name" value="Divalent-metal-dependent TIM barrel enzymes"/>
    <property type="match status" value="1"/>
</dbReference>
<dbReference type="InterPro" id="IPR026040">
    <property type="entry name" value="HyI-like"/>
</dbReference>
<dbReference type="InterPro" id="IPR050417">
    <property type="entry name" value="Sugar_Epim/Isomerase"/>
</dbReference>
<dbReference type="InterPro" id="IPR036237">
    <property type="entry name" value="Xyl_isomerase-like_sf"/>
</dbReference>
<dbReference type="InterPro" id="IPR013022">
    <property type="entry name" value="Xyl_isomerase-like_TIM-brl"/>
</dbReference>
<dbReference type="PANTHER" id="PTHR43489:SF6">
    <property type="entry name" value="HYDROXYPYRUVATE ISOMERASE-RELATED"/>
    <property type="match status" value="1"/>
</dbReference>
<dbReference type="PANTHER" id="PTHR43489">
    <property type="entry name" value="ISOMERASE"/>
    <property type="match status" value="1"/>
</dbReference>
<dbReference type="Pfam" id="PF01261">
    <property type="entry name" value="AP_endonuc_2"/>
    <property type="match status" value="1"/>
</dbReference>
<dbReference type="PIRSF" id="PIRSF006241">
    <property type="entry name" value="HyI"/>
    <property type="match status" value="1"/>
</dbReference>
<dbReference type="SUPFAM" id="SSF51658">
    <property type="entry name" value="Xylose isomerase-like"/>
    <property type="match status" value="1"/>
</dbReference>
<feature type="chain" id="PRO_0000289242" description="Putative hydroxypyruvate isomerase">
    <location>
        <begin position="1"/>
        <end position="277"/>
    </location>
</feature>
<feature type="active site" description="Proton donor/acceptor" evidence="2">
    <location>
        <position position="150"/>
    </location>
</feature>
<feature type="active site" description="Proton donor/acceptor" evidence="2">
    <location>
        <position position="249"/>
    </location>
</feature>
<feature type="sequence conflict" description="In Ref. 2; AAH24619/AAI00402." evidence="3" ref="2">
    <original>T</original>
    <variation>A</variation>
    <location>
        <position position="127"/>
    </location>
</feature>
<feature type="sequence conflict" description="In Ref. 2; AAH24619/AAI00402." evidence="3" ref="2">
    <original>G</original>
    <variation>S</variation>
    <location>
        <position position="223"/>
    </location>
</feature>
<organism>
    <name type="scientific">Mus musculus</name>
    <name type="common">Mouse</name>
    <dbReference type="NCBI Taxonomy" id="10090"/>
    <lineage>
        <taxon>Eukaryota</taxon>
        <taxon>Metazoa</taxon>
        <taxon>Chordata</taxon>
        <taxon>Craniata</taxon>
        <taxon>Vertebrata</taxon>
        <taxon>Euteleostomi</taxon>
        <taxon>Mammalia</taxon>
        <taxon>Eutheria</taxon>
        <taxon>Euarchontoglires</taxon>
        <taxon>Glires</taxon>
        <taxon>Rodentia</taxon>
        <taxon>Myomorpha</taxon>
        <taxon>Muroidea</taxon>
        <taxon>Muridae</taxon>
        <taxon>Murinae</taxon>
        <taxon>Mus</taxon>
        <taxon>Mus</taxon>
    </lineage>
</organism>
<reference key="1">
    <citation type="journal article" date="2009" name="PLoS Biol.">
        <title>Lineage-specific biology revealed by a finished genome assembly of the mouse.</title>
        <authorList>
            <person name="Church D.M."/>
            <person name="Goodstadt L."/>
            <person name="Hillier L.W."/>
            <person name="Zody M.C."/>
            <person name="Goldstein S."/>
            <person name="She X."/>
            <person name="Bult C.J."/>
            <person name="Agarwala R."/>
            <person name="Cherry J.L."/>
            <person name="DiCuccio M."/>
            <person name="Hlavina W."/>
            <person name="Kapustin Y."/>
            <person name="Meric P."/>
            <person name="Maglott D."/>
            <person name="Birtle Z."/>
            <person name="Marques A.C."/>
            <person name="Graves T."/>
            <person name="Zhou S."/>
            <person name="Teague B."/>
            <person name="Potamousis K."/>
            <person name="Churas C."/>
            <person name="Place M."/>
            <person name="Herschleb J."/>
            <person name="Runnheim R."/>
            <person name="Forrest D."/>
            <person name="Amos-Landgraf J."/>
            <person name="Schwartz D.C."/>
            <person name="Cheng Z."/>
            <person name="Lindblad-Toh K."/>
            <person name="Eichler E.E."/>
            <person name="Ponting C.P."/>
        </authorList>
    </citation>
    <scope>NUCLEOTIDE SEQUENCE [LARGE SCALE GENOMIC DNA]</scope>
    <source>
        <strain>C57BL/6J</strain>
    </source>
</reference>
<reference key="2">
    <citation type="journal article" date="2004" name="Genome Res.">
        <title>The status, quality, and expansion of the NIH full-length cDNA project: the Mammalian Gene Collection (MGC).</title>
        <authorList>
            <consortium name="The MGC Project Team"/>
        </authorList>
    </citation>
    <scope>NUCLEOTIDE SEQUENCE [LARGE SCALE MRNA]</scope>
    <source>
        <strain>FVB/N</strain>
        <strain>FVB/N-3</strain>
        <tissue>Mammary tumor</tissue>
        <tissue>Salivary gland</tissue>
    </source>
</reference>
<reference key="3">
    <citation type="journal article" date="2010" name="Cell">
        <title>A tissue-specific atlas of mouse protein phosphorylation and expression.</title>
        <authorList>
            <person name="Huttlin E.L."/>
            <person name="Jedrychowski M.P."/>
            <person name="Elias J.E."/>
            <person name="Goswami T."/>
            <person name="Rad R."/>
            <person name="Beausoleil S.A."/>
            <person name="Villen J."/>
            <person name="Haas W."/>
            <person name="Sowa M.E."/>
            <person name="Gygi S.P."/>
        </authorList>
    </citation>
    <scope>IDENTIFICATION BY MASS SPECTROMETRY [LARGE SCALE ANALYSIS]</scope>
    <source>
        <tissue>Brain</tissue>
        <tissue>Brown adipose tissue</tissue>
        <tissue>Kidney</tissue>
        <tissue>Liver</tissue>
        <tissue>Lung</tissue>
        <tissue>Pancreas</tissue>
        <tissue>Spleen</tissue>
        <tissue>Testis</tissue>
    </source>
</reference>
<proteinExistence type="evidence at protein level"/>
<sequence length="277" mass="30449">MAPLRFSANVSWLFPELPGLPERLHAAGRAGFKAAEVAWPYTESPQALASAAQTAGLRLVLINTPRGDHEKGEMGLGAVPGRQAAFREGLEQAVLYAKALGCPRIHLMAGRVPQGADRAAVKGEMETVFVENLKHAAGVLAQENLVGLLEPINTRITDPQYFLDTPRQAAAILQKVGRPNLQLQMDIFHWQIMDGNLTGNIREFLPTVGHVQVAQVPDRGEPGSSGELDFTYLFQLLEDEGYQGFVGCEYRPRGDTVEGLSWLRSYWDRRGHPRTGQ</sequence>
<gene>
    <name type="primary">Hyi</name>
</gene>
<protein>
    <recommendedName>
        <fullName>Putative hydroxypyruvate isomerase</fullName>
        <ecNumber>5.3.1.22</ecNumber>
    </recommendedName>
</protein>
<keyword id="KW-0413">Isomerase</keyword>
<keyword id="KW-1185">Reference proteome</keyword>
<evidence type="ECO:0000250" key="1"/>
<evidence type="ECO:0000250" key="2">
    <source>
        <dbReference type="UniProtKB" id="Q9WYP7"/>
    </source>
</evidence>
<evidence type="ECO:0000305" key="3"/>
<comment type="function">
    <text evidence="1">Catalyzes the reversible isomerization between hydroxypyruvate and 2-hydroxy-3-oxopropanoate (also termed tartronate semialdehyde).</text>
</comment>
<comment type="catalytic activity">
    <reaction>
        <text>3-hydroxypyruvate = 2-hydroxy-3-oxopropanoate</text>
        <dbReference type="Rhea" id="RHEA:11952"/>
        <dbReference type="ChEBI" id="CHEBI:17180"/>
        <dbReference type="ChEBI" id="CHEBI:57978"/>
        <dbReference type="EC" id="5.3.1.22"/>
    </reaction>
</comment>
<comment type="similarity">
    <text evidence="3">Belongs to the hyi family.</text>
</comment>
<comment type="sequence caution" evidence="3">
    <conflict type="erroneous gene model prediction">
        <sequence resource="EMBL-CDS" id="CAM15196"/>
    </conflict>
</comment>
<name>HYI_MOUSE</name>